<sequence>GVCDMADLA</sequence>
<keyword id="KW-0929">Antimicrobial</keyword>
<keyword id="KW-0903">Direct protein sequencing</keyword>
<keyword id="KW-0295">Fungicide</keyword>
<comment type="function">
    <text evidence="1">Antifungal activity. Inhibits mycelial growth of F.cinera, F.oxysporum, M.arachidicola and P.piricola. Lacks protease, ribonuclease, deoxyribonuclease and hemagglutinating activity.</text>
</comment>
<comment type="subunit">
    <text evidence="1">Homodimer.</text>
</comment>
<dbReference type="GO" id="GO:0050832">
    <property type="term" value="P:defense response to fungus"/>
    <property type="evidence" value="ECO:0007669"/>
    <property type="project" value="UniProtKB-KW"/>
</dbReference>
<dbReference type="GO" id="GO:0050830">
    <property type="term" value="P:defense response to Gram-positive bacterium"/>
    <property type="evidence" value="ECO:0000314"/>
    <property type="project" value="UniProtKB"/>
</dbReference>
<dbReference type="GO" id="GO:0031640">
    <property type="term" value="P:killing of cells of another organism"/>
    <property type="evidence" value="ECO:0007669"/>
    <property type="project" value="UniProtKB-KW"/>
</dbReference>
<protein>
    <recommendedName>
        <fullName>Alveolarin</fullName>
    </recommendedName>
</protein>
<name>ALVOL_POLAE</name>
<reference evidence="3" key="1">
    <citation type="journal article" date="2004" name="Peptides">
        <title>Alveolarin, a novel antifungal polypeptide from the wild mushroom Polyporus alveolaris.</title>
        <authorList>
            <person name="Wang H."/>
            <person name="Ng T.B."/>
            <person name="Liu Q."/>
        </authorList>
    </citation>
    <scope>PROTEIN SEQUENCE</scope>
    <scope>FUNCTION</scope>
    <scope>SUBUNIT</scope>
</reference>
<accession>P84760</accession>
<feature type="chain" id="PRO_0000076179" description="Alveolarin">
    <location>
        <begin position="1"/>
        <end position="9" status="greater than"/>
    </location>
</feature>
<feature type="non-terminal residue" evidence="2">
    <location>
        <position position="9"/>
    </location>
</feature>
<proteinExistence type="evidence at protein level"/>
<organism>
    <name type="scientific">Polyporus alveolaris</name>
    <name type="common">Hexagonal-pored polypore</name>
    <name type="synonym">Neofavolus alveolaris</name>
    <dbReference type="NCBI Taxonomy" id="1260784"/>
    <lineage>
        <taxon>Eukaryota</taxon>
        <taxon>Fungi</taxon>
        <taxon>Dikarya</taxon>
        <taxon>Basidiomycota</taxon>
        <taxon>Agaricomycotina</taxon>
        <taxon>Agaricomycetes</taxon>
        <taxon>Polyporales</taxon>
        <taxon>Polyporaceae</taxon>
        <taxon>Neofavolus</taxon>
    </lineage>
</organism>
<evidence type="ECO:0000269" key="1">
    <source>
    </source>
</evidence>
<evidence type="ECO:0000303" key="2">
    <source>
    </source>
</evidence>
<evidence type="ECO:0000305" key="3"/>